<keyword id="KW-1157">Cap snatching</keyword>
<keyword id="KW-0255">Endonuclease</keyword>
<keyword id="KW-1262">Eukaryotic host gene expression shutoff by virus</keyword>
<keyword id="KW-1191">Eukaryotic host transcription shutoff by virus</keyword>
<keyword id="KW-1035">Host cytoplasm</keyword>
<keyword id="KW-1190">Host gene expression shutoff by virus</keyword>
<keyword id="KW-1048">Host nucleus</keyword>
<keyword id="KW-0945">Host-virus interaction</keyword>
<keyword id="KW-0378">Hydrolase</keyword>
<keyword id="KW-1104">Inhibition of host RNA polymerase II by virus</keyword>
<keyword id="KW-0464">Manganese</keyword>
<keyword id="KW-0479">Metal-binding</keyword>
<keyword id="KW-0540">Nuclease</keyword>
<keyword id="KW-0597">Phosphoprotein</keyword>
<keyword id="KW-0688">Ribosomal frameshifting</keyword>
<dbReference type="EC" id="3.1.-.-" evidence="2"/>
<dbReference type="EMBL" id="M26084">
    <property type="protein sequence ID" value="AAA43685.1"/>
    <property type="molecule type" value="Genomic_RNA"/>
</dbReference>
<dbReference type="EMBL" id="CY005911">
    <property type="protein sequence ID" value="ABB21826.1"/>
    <property type="molecule type" value="Genomic_RNA"/>
</dbReference>
<dbReference type="SMR" id="P13178"/>
<dbReference type="MEROPS" id="S62.001"/>
<dbReference type="Proteomes" id="UP000008579">
    <property type="component" value="Genome"/>
</dbReference>
<dbReference type="GO" id="GO:0030430">
    <property type="term" value="C:host cell cytoplasm"/>
    <property type="evidence" value="ECO:0007669"/>
    <property type="project" value="UniProtKB-SubCell"/>
</dbReference>
<dbReference type="GO" id="GO:0042025">
    <property type="term" value="C:host cell nucleus"/>
    <property type="evidence" value="ECO:0007669"/>
    <property type="project" value="UniProtKB-SubCell"/>
</dbReference>
<dbReference type="GO" id="GO:0004519">
    <property type="term" value="F:endonuclease activity"/>
    <property type="evidence" value="ECO:0007669"/>
    <property type="project" value="UniProtKB-KW"/>
</dbReference>
<dbReference type="GO" id="GO:0046872">
    <property type="term" value="F:metal ion binding"/>
    <property type="evidence" value="ECO:0007669"/>
    <property type="project" value="UniProtKB-KW"/>
</dbReference>
<dbReference type="GO" id="GO:0003723">
    <property type="term" value="F:RNA binding"/>
    <property type="evidence" value="ECO:0007669"/>
    <property type="project" value="UniProtKB-UniRule"/>
</dbReference>
<dbReference type="GO" id="GO:0075526">
    <property type="term" value="P:cap snatching"/>
    <property type="evidence" value="ECO:0007669"/>
    <property type="project" value="UniProtKB-UniRule"/>
</dbReference>
<dbReference type="GO" id="GO:0006351">
    <property type="term" value="P:DNA-templated transcription"/>
    <property type="evidence" value="ECO:0007669"/>
    <property type="project" value="UniProtKB-UniRule"/>
</dbReference>
<dbReference type="GO" id="GO:0039657">
    <property type="term" value="P:symbiont-mediated suppression of host gene expression"/>
    <property type="evidence" value="ECO:0007669"/>
    <property type="project" value="UniProtKB-KW"/>
</dbReference>
<dbReference type="GO" id="GO:0039523">
    <property type="term" value="P:symbiont-mediated suppression of host mRNA transcription via inhibition of RNA polymerase II activity"/>
    <property type="evidence" value="ECO:0007669"/>
    <property type="project" value="UniProtKB-UniRule"/>
</dbReference>
<dbReference type="GO" id="GO:0039694">
    <property type="term" value="P:viral RNA genome replication"/>
    <property type="evidence" value="ECO:0007669"/>
    <property type="project" value="InterPro"/>
</dbReference>
<dbReference type="GO" id="GO:0075523">
    <property type="term" value="P:viral translational frameshifting"/>
    <property type="evidence" value="ECO:0007669"/>
    <property type="project" value="UniProtKB-KW"/>
</dbReference>
<dbReference type="FunFam" id="3.40.91.90:FF:000001">
    <property type="entry name" value="Polymerase acidic protein"/>
    <property type="match status" value="1"/>
</dbReference>
<dbReference type="Gene3D" id="3.40.91.90">
    <property type="entry name" value="Influenza RNA-dependent RNA polymerase subunit PA, endonuclease domain"/>
    <property type="match status" value="1"/>
</dbReference>
<dbReference type="HAMAP" id="MF_04063">
    <property type="entry name" value="INFV_PA"/>
    <property type="match status" value="1"/>
</dbReference>
<dbReference type="InterPro" id="IPR037534">
    <property type="entry name" value="INFV_PA"/>
</dbReference>
<dbReference type="InterPro" id="IPR001009">
    <property type="entry name" value="PA/PA-X"/>
</dbReference>
<dbReference type="InterPro" id="IPR038372">
    <property type="entry name" value="PA/PA-X_sf"/>
</dbReference>
<dbReference type="Pfam" id="PF00603">
    <property type="entry name" value="Flu_PA"/>
    <property type="match status" value="1"/>
</dbReference>
<accession>P13178</accession>
<accession>Q20NN6</accession>
<gene>
    <name evidence="2" type="primary">PA</name>
</gene>
<comment type="function">
    <text evidence="2">Plays an essential role in viral RNA transcription and replication by forming the heterotrimeric polymerase complex together with PB1 and PB2 subunits. The complex transcribes viral mRNAs by using a unique mechanism called cap-snatching. It consists in the hijacking and cleavage of host capped pre-mRNAs. These short capped RNAs are then used as primers for viral mRNAs. The PB2 subunit is responsible for the binding of the 5' cap of cellular pre-mRNAs which are subsequently cleaved after 10-13 nucleotides by the PA subunit that carries the endonuclease activity.</text>
</comment>
<comment type="cofactor">
    <cofactor evidence="2">
        <name>Mn(2+)</name>
        <dbReference type="ChEBI" id="CHEBI:29035"/>
    </cofactor>
    <text evidence="2">Binds 2 manganese ions per subunit.</text>
</comment>
<comment type="subunit">
    <text evidence="1 2">Influenza RNA polymerase is composed of three subunits: PB1, PB2 and PA. Interacts (via C-terminus) with PB1 (via N-terminus).</text>
</comment>
<comment type="subcellular location">
    <subcellularLocation>
        <location evidence="2">Host cytoplasm</location>
    </subcellularLocation>
    <subcellularLocation>
        <location evidence="2">Host nucleus</location>
    </subcellularLocation>
    <text evidence="1 2">PB1 and PA are transported in the host nucleus as a complex.</text>
</comment>
<comment type="alternative products">
    <event type="ribosomal frameshifting"/>
    <isoform>
        <id>P13178-1</id>
        <name>PA</name>
        <sequence type="displayed"/>
    </isoform>
    <isoform>
        <id>P0DJV7-1</id>
        <name>PA-X</name>
        <sequence type="external"/>
    </isoform>
</comment>
<comment type="PTM">
    <text evidence="1 2">Phosphorylated on serines and threonines by host kinases, including human casein kinase II.</text>
</comment>
<comment type="similarity">
    <text evidence="2">Belongs to the influenza viruses PA family.</text>
</comment>
<name>PA_I80A8</name>
<organism>
    <name type="scientific">Influenza A virus (strain A/Turkey/Minnesota/833/1980 H4N2)</name>
    <dbReference type="NCBI Taxonomy" id="383603"/>
    <lineage>
        <taxon>Viruses</taxon>
        <taxon>Riboviria</taxon>
        <taxon>Orthornavirae</taxon>
        <taxon>Negarnaviricota</taxon>
        <taxon>Polyploviricotina</taxon>
        <taxon>Insthoviricetes</taxon>
        <taxon>Articulavirales</taxon>
        <taxon>Orthomyxoviridae</taxon>
        <taxon>Alphainfluenzavirus</taxon>
        <taxon>Alphainfluenzavirus influenzae</taxon>
        <taxon>Influenza A virus</taxon>
    </lineage>
</organism>
<sequence length="716" mass="82550">MEDFVRQCFNPMIVELAEKAMKEYGEDPKIETNKFAAICTHLEVCFMYSDFHFIDERGESIIVESGDPNALLKHRFEIIEGRDRTMAWTVVNSICNTTGVEKPKFLPDLYDYKENRFIEIGVTRREVHIYYLEKANKIKSEKTHIHIFSFTGEEMATKADYTLDEESRARIKTRLFTIRQEMASRGLWDSFRQSERGEETIEERFEITGTMRRLADQSLPPNFSSLENFRAYVDGFEPNGCIEGKLSQMSKEVNARIEPFLKTTPRPLRLPDGPPCSQRSKFLLMDALKLSIEDPSHEGEGIPLYDAIKCMKTFFGWKEPNIIKPHEKGINPNYLLAWKQVLAELQDIENEEKIPKTKNMKKTSQLKWALGENMAPEKVDFEDCKDISDLKQYDSDEPEPRSLASWIQSEFNKACELTDSSWIELDEIGEDIAPIEHIASMRRNYFTAEVSHCRATEYIMKGVYINTALLNASCAAMDDFQVIPMISKCRTKEGRRKTNLYGFIIKGRSHLRNDTDVVNFVSMEFSLTDPRLEPHKWEKYCVLEIGDMLLRTAIGQVSRPMFLYVRTNGTSKIKMKWGMEMRRCLLQSLQQIESMIEAESSVKEKDMTKEFFENKSETWPIGESPKGVEEGSIGKVCRTLLAKSVFNSLYASPQLEGFSAESRKLLLIVQALRDNLEPGTFDLGGLYEAIEECLINDPWVLLNASWFNSFLTHALK</sequence>
<proteinExistence type="inferred from homology"/>
<protein>
    <recommendedName>
        <fullName evidence="2">Polymerase acidic protein</fullName>
        <ecNumber evidence="2">3.1.-.-</ecNumber>
    </recommendedName>
    <alternativeName>
        <fullName evidence="2">RNA-directed RNA polymerase subunit P2</fullName>
    </alternativeName>
</protein>
<feature type="chain" id="PRO_0000078799" description="Polymerase acidic protein">
    <location>
        <begin position="1"/>
        <end position="716"/>
    </location>
</feature>
<feature type="short sequence motif" description="Nuclear localization signal 1 (NLS1)" evidence="1 2">
    <location>
        <begin position="124"/>
        <end position="139"/>
    </location>
</feature>
<feature type="short sequence motif" description="Nuclear localization signal 2 (NLS2)" evidence="1 2">
    <location>
        <begin position="184"/>
        <end position="247"/>
    </location>
</feature>
<feature type="binding site" evidence="2">
    <location>
        <position position="41"/>
    </location>
    <ligand>
        <name>Mn(2+)</name>
        <dbReference type="ChEBI" id="CHEBI:29035"/>
        <label>1</label>
    </ligand>
</feature>
<feature type="binding site" evidence="2">
    <location>
        <position position="80"/>
    </location>
    <ligand>
        <name>Mn(2+)</name>
        <dbReference type="ChEBI" id="CHEBI:29035"/>
        <label>2</label>
    </ligand>
</feature>
<feature type="binding site" evidence="2">
    <location>
        <position position="108"/>
    </location>
    <ligand>
        <name>Mn(2+)</name>
        <dbReference type="ChEBI" id="CHEBI:29035"/>
        <label>1</label>
    </ligand>
</feature>
<feature type="binding site" evidence="2">
    <location>
        <position position="108"/>
    </location>
    <ligand>
        <name>Mn(2+)</name>
        <dbReference type="ChEBI" id="CHEBI:29035"/>
        <label>2</label>
    </ligand>
</feature>
<feature type="binding site" evidence="2">
    <location>
        <position position="119"/>
    </location>
    <ligand>
        <name>Mn(2+)</name>
        <dbReference type="ChEBI" id="CHEBI:29035"/>
        <label>1</label>
    </ligand>
</feature>
<feature type="binding site" evidence="2">
    <location>
        <position position="120"/>
    </location>
    <ligand>
        <name>Mn(2+)</name>
        <dbReference type="ChEBI" id="CHEBI:29035"/>
        <label>1</label>
    </ligand>
</feature>
<feature type="sequence conflict" description="In Ref. 2; ABB21826." ref="2">
    <original>V</original>
    <variation>L</variation>
    <location>
        <position position="482"/>
    </location>
</feature>
<organismHost>
    <name type="scientific">Aves</name>
    <dbReference type="NCBI Taxonomy" id="8782"/>
</organismHost>
<reference key="1">
    <citation type="journal article" date="1989" name="Virology">
        <title>Evolutionary pathways of the PA genes of influenza A viruses.</title>
        <authorList>
            <person name="Okazaki K."/>
            <person name="Kawaoka Y."/>
            <person name="Webster R.G."/>
        </authorList>
    </citation>
    <scope>NUCLEOTIDE SEQUENCE [GENOMIC RNA]</scope>
</reference>
<reference key="2">
    <citation type="journal article" date="2006" name="Science">
        <title>Large-scale sequence analysis of avian influenza isolates.</title>
        <authorList>
            <person name="Obenauer J.C."/>
            <person name="Denson J."/>
            <person name="Mehta P.K."/>
            <person name="Su X."/>
            <person name="Mukatira S."/>
            <person name="Finkelstein D.B."/>
            <person name="Xu X."/>
            <person name="Wang J."/>
            <person name="Ma J."/>
            <person name="Fan Y."/>
            <person name="Rakestraw K.M."/>
            <person name="Webster R.G."/>
            <person name="Hoffmann E."/>
            <person name="Krauss S."/>
            <person name="Zheng J."/>
            <person name="Zhang Z."/>
            <person name="Naeve C.W."/>
        </authorList>
    </citation>
    <scope>NUCLEOTIDE SEQUENCE [GENOMIC RNA]</scope>
</reference>
<evidence type="ECO:0000250" key="1">
    <source>
        <dbReference type="UniProtKB" id="P03433"/>
    </source>
</evidence>
<evidence type="ECO:0000255" key="2">
    <source>
        <dbReference type="HAMAP-Rule" id="MF_04063"/>
    </source>
</evidence>